<reference key="1">
    <citation type="submission" date="2006-12" db="EMBL/GenBank/DDBJ databases">
        <authorList>
            <person name="Fouts D.E."/>
            <person name="Nelson K.E."/>
            <person name="Sebastian Y."/>
        </authorList>
    </citation>
    <scope>NUCLEOTIDE SEQUENCE [LARGE SCALE GENOMIC DNA]</scope>
    <source>
        <strain>81-176</strain>
    </source>
</reference>
<evidence type="ECO:0000255" key="1">
    <source>
        <dbReference type="HAMAP-Rule" id="MF_00004"/>
    </source>
</evidence>
<feature type="chain" id="PRO_1000000271" description="Adenine phosphoribosyltransferase">
    <location>
        <begin position="1"/>
        <end position="182"/>
    </location>
</feature>
<name>APT_CAMJJ</name>
<keyword id="KW-0963">Cytoplasm</keyword>
<keyword id="KW-0328">Glycosyltransferase</keyword>
<keyword id="KW-0660">Purine salvage</keyword>
<keyword id="KW-0808">Transferase</keyword>
<comment type="function">
    <text evidence="1">Catalyzes a salvage reaction resulting in the formation of AMP, that is energically less costly than de novo synthesis.</text>
</comment>
<comment type="catalytic activity">
    <reaction evidence="1">
        <text>AMP + diphosphate = 5-phospho-alpha-D-ribose 1-diphosphate + adenine</text>
        <dbReference type="Rhea" id="RHEA:16609"/>
        <dbReference type="ChEBI" id="CHEBI:16708"/>
        <dbReference type="ChEBI" id="CHEBI:33019"/>
        <dbReference type="ChEBI" id="CHEBI:58017"/>
        <dbReference type="ChEBI" id="CHEBI:456215"/>
        <dbReference type="EC" id="2.4.2.7"/>
    </reaction>
</comment>
<comment type="pathway">
    <text evidence="1">Purine metabolism; AMP biosynthesis via salvage pathway; AMP from adenine: step 1/1.</text>
</comment>
<comment type="subunit">
    <text evidence="1">Homodimer.</text>
</comment>
<comment type="subcellular location">
    <subcellularLocation>
        <location evidence="1">Cytoplasm</location>
    </subcellularLocation>
</comment>
<comment type="similarity">
    <text evidence="1">Belongs to the purine/pyrimidine phosphoribosyltransferase family.</text>
</comment>
<accession>A1VZR0</accession>
<sequence length="182" mass="20723">MIKLTQEEQKYLFDSIRIIPDFPKKGIIFRDITTLLNNKEALNFLLKHLKERYKDYNLDFIAGTESRGFIFASMICAKLNLPFVPIRKPGKLPFETFSCEYDLEYGSDKVELHKDAFKNIQNARVLLVDDLIATGGTAIASYELIQKAGAKCVEACFLMNLKDLNGANKLEKLTSVYSVLEI</sequence>
<gene>
    <name evidence="1" type="primary">apt</name>
    <name type="ordered locus">CJJ81176_0934</name>
</gene>
<protein>
    <recommendedName>
        <fullName evidence="1">Adenine phosphoribosyltransferase</fullName>
        <shortName evidence="1">APRT</shortName>
        <ecNumber evidence="1">2.4.2.7</ecNumber>
    </recommendedName>
</protein>
<proteinExistence type="inferred from homology"/>
<organism>
    <name type="scientific">Campylobacter jejuni subsp. jejuni serotype O:23/36 (strain 81-176)</name>
    <dbReference type="NCBI Taxonomy" id="354242"/>
    <lineage>
        <taxon>Bacteria</taxon>
        <taxon>Pseudomonadati</taxon>
        <taxon>Campylobacterota</taxon>
        <taxon>Epsilonproteobacteria</taxon>
        <taxon>Campylobacterales</taxon>
        <taxon>Campylobacteraceae</taxon>
        <taxon>Campylobacter</taxon>
    </lineage>
</organism>
<dbReference type="EC" id="2.4.2.7" evidence="1"/>
<dbReference type="EMBL" id="CP000538">
    <property type="protein sequence ID" value="EAQ71886.1"/>
    <property type="molecule type" value="Genomic_DNA"/>
</dbReference>
<dbReference type="RefSeq" id="WP_002855863.1">
    <property type="nucleotide sequence ID" value="NC_008787.1"/>
</dbReference>
<dbReference type="SMR" id="A1VZR0"/>
<dbReference type="KEGG" id="cjj:CJJ81176_0934"/>
<dbReference type="eggNOG" id="COG0503">
    <property type="taxonomic scope" value="Bacteria"/>
</dbReference>
<dbReference type="HOGENOM" id="CLU_063339_3_0_7"/>
<dbReference type="UniPathway" id="UPA00588">
    <property type="reaction ID" value="UER00646"/>
</dbReference>
<dbReference type="Proteomes" id="UP000000646">
    <property type="component" value="Chromosome"/>
</dbReference>
<dbReference type="GO" id="GO:0005737">
    <property type="term" value="C:cytoplasm"/>
    <property type="evidence" value="ECO:0007669"/>
    <property type="project" value="UniProtKB-SubCell"/>
</dbReference>
<dbReference type="GO" id="GO:0002055">
    <property type="term" value="F:adenine binding"/>
    <property type="evidence" value="ECO:0007669"/>
    <property type="project" value="TreeGrafter"/>
</dbReference>
<dbReference type="GO" id="GO:0003999">
    <property type="term" value="F:adenine phosphoribosyltransferase activity"/>
    <property type="evidence" value="ECO:0007669"/>
    <property type="project" value="UniProtKB-UniRule"/>
</dbReference>
<dbReference type="GO" id="GO:0016208">
    <property type="term" value="F:AMP binding"/>
    <property type="evidence" value="ECO:0007669"/>
    <property type="project" value="TreeGrafter"/>
</dbReference>
<dbReference type="GO" id="GO:0006168">
    <property type="term" value="P:adenine salvage"/>
    <property type="evidence" value="ECO:0007669"/>
    <property type="project" value="InterPro"/>
</dbReference>
<dbReference type="GO" id="GO:0044209">
    <property type="term" value="P:AMP salvage"/>
    <property type="evidence" value="ECO:0007669"/>
    <property type="project" value="UniProtKB-UniRule"/>
</dbReference>
<dbReference type="GO" id="GO:0006166">
    <property type="term" value="P:purine ribonucleoside salvage"/>
    <property type="evidence" value="ECO:0007669"/>
    <property type="project" value="UniProtKB-KW"/>
</dbReference>
<dbReference type="CDD" id="cd06223">
    <property type="entry name" value="PRTases_typeI"/>
    <property type="match status" value="1"/>
</dbReference>
<dbReference type="FunFam" id="3.40.50.2020:FF:000021">
    <property type="entry name" value="Adenine phosphoribosyltransferase"/>
    <property type="match status" value="1"/>
</dbReference>
<dbReference type="Gene3D" id="3.40.50.2020">
    <property type="match status" value="1"/>
</dbReference>
<dbReference type="HAMAP" id="MF_00004">
    <property type="entry name" value="Aden_phosphoribosyltr"/>
    <property type="match status" value="1"/>
</dbReference>
<dbReference type="InterPro" id="IPR005764">
    <property type="entry name" value="Ade_phspho_trans"/>
</dbReference>
<dbReference type="InterPro" id="IPR000836">
    <property type="entry name" value="PRibTrfase_dom"/>
</dbReference>
<dbReference type="InterPro" id="IPR029057">
    <property type="entry name" value="PRTase-like"/>
</dbReference>
<dbReference type="InterPro" id="IPR050054">
    <property type="entry name" value="UPRTase/APRTase"/>
</dbReference>
<dbReference type="NCBIfam" id="TIGR01090">
    <property type="entry name" value="apt"/>
    <property type="match status" value="1"/>
</dbReference>
<dbReference type="NCBIfam" id="NF002634">
    <property type="entry name" value="PRK02304.1-3"/>
    <property type="match status" value="1"/>
</dbReference>
<dbReference type="NCBIfam" id="NF002636">
    <property type="entry name" value="PRK02304.1-5"/>
    <property type="match status" value="1"/>
</dbReference>
<dbReference type="PANTHER" id="PTHR32315">
    <property type="entry name" value="ADENINE PHOSPHORIBOSYLTRANSFERASE"/>
    <property type="match status" value="1"/>
</dbReference>
<dbReference type="PANTHER" id="PTHR32315:SF3">
    <property type="entry name" value="ADENINE PHOSPHORIBOSYLTRANSFERASE"/>
    <property type="match status" value="1"/>
</dbReference>
<dbReference type="Pfam" id="PF00156">
    <property type="entry name" value="Pribosyltran"/>
    <property type="match status" value="1"/>
</dbReference>
<dbReference type="SUPFAM" id="SSF53271">
    <property type="entry name" value="PRTase-like"/>
    <property type="match status" value="1"/>
</dbReference>
<dbReference type="PROSITE" id="PS00103">
    <property type="entry name" value="PUR_PYR_PR_TRANSFER"/>
    <property type="match status" value="1"/>
</dbReference>